<comment type="function">
    <text evidence="1">Catalyzes the radical-mediated insertion of two sulfur atoms into the C-6 and C-8 positions of the octanoyl moiety bound to the lipoyl domains of lipoate-dependent enzymes, thereby converting the octanoylated domains into lipoylated derivatives.</text>
</comment>
<comment type="catalytic activity">
    <reaction evidence="1">
        <text>[[Fe-S] cluster scaffold protein carrying a second [4Fe-4S](2+) cluster] + N(6)-octanoyl-L-lysyl-[protein] + 2 oxidized [2Fe-2S]-[ferredoxin] + 2 S-adenosyl-L-methionine + 4 H(+) = [[Fe-S] cluster scaffold protein] + N(6)-[(R)-dihydrolipoyl]-L-lysyl-[protein] + 4 Fe(3+) + 2 hydrogen sulfide + 2 5'-deoxyadenosine + 2 L-methionine + 2 reduced [2Fe-2S]-[ferredoxin]</text>
        <dbReference type="Rhea" id="RHEA:16585"/>
        <dbReference type="Rhea" id="RHEA-COMP:9928"/>
        <dbReference type="Rhea" id="RHEA-COMP:10000"/>
        <dbReference type="Rhea" id="RHEA-COMP:10001"/>
        <dbReference type="Rhea" id="RHEA-COMP:10475"/>
        <dbReference type="Rhea" id="RHEA-COMP:14568"/>
        <dbReference type="Rhea" id="RHEA-COMP:14569"/>
        <dbReference type="ChEBI" id="CHEBI:15378"/>
        <dbReference type="ChEBI" id="CHEBI:17319"/>
        <dbReference type="ChEBI" id="CHEBI:29034"/>
        <dbReference type="ChEBI" id="CHEBI:29919"/>
        <dbReference type="ChEBI" id="CHEBI:33722"/>
        <dbReference type="ChEBI" id="CHEBI:33737"/>
        <dbReference type="ChEBI" id="CHEBI:33738"/>
        <dbReference type="ChEBI" id="CHEBI:57844"/>
        <dbReference type="ChEBI" id="CHEBI:59789"/>
        <dbReference type="ChEBI" id="CHEBI:78809"/>
        <dbReference type="ChEBI" id="CHEBI:83100"/>
        <dbReference type="EC" id="2.8.1.8"/>
    </reaction>
</comment>
<comment type="cofactor">
    <cofactor evidence="1">
        <name>[4Fe-4S] cluster</name>
        <dbReference type="ChEBI" id="CHEBI:49883"/>
    </cofactor>
    <text evidence="1">Binds 2 [4Fe-4S] clusters per subunit. One cluster is coordinated with 3 cysteines and an exchangeable S-adenosyl-L-methionine.</text>
</comment>
<comment type="pathway">
    <text evidence="1">Protein modification; protein lipoylation via endogenous pathway; protein N(6)-(lipoyl)lysine from octanoyl-[acyl-carrier-protein]: step 2/2.</text>
</comment>
<comment type="subcellular location">
    <subcellularLocation>
        <location evidence="1">Cytoplasm</location>
    </subcellularLocation>
</comment>
<comment type="similarity">
    <text evidence="1">Belongs to the radical SAM superfamily. Lipoyl synthase family.</text>
</comment>
<comment type="sequence caution" evidence="4">
    <conflict type="erroneous initiation">
        <sequence resource="EMBL-CDS" id="AAO44561"/>
    </conflict>
</comment>
<gene>
    <name evidence="1" type="primary">lipA</name>
    <name type="ordered locus">TWT_464</name>
</gene>
<organism>
    <name type="scientific">Tropheryma whipplei (strain Twist)</name>
    <name type="common">Whipple's bacillus</name>
    <dbReference type="NCBI Taxonomy" id="203267"/>
    <lineage>
        <taxon>Bacteria</taxon>
        <taxon>Bacillati</taxon>
        <taxon>Actinomycetota</taxon>
        <taxon>Actinomycetes</taxon>
        <taxon>Micrococcales</taxon>
        <taxon>Tropherymataceae</taxon>
        <taxon>Tropheryma</taxon>
    </lineage>
</organism>
<accession>Q83MU9</accession>
<evidence type="ECO:0000255" key="1">
    <source>
        <dbReference type="HAMAP-Rule" id="MF_00206"/>
    </source>
</evidence>
<evidence type="ECO:0000255" key="2">
    <source>
        <dbReference type="PROSITE-ProRule" id="PRU01266"/>
    </source>
</evidence>
<evidence type="ECO:0000256" key="3">
    <source>
        <dbReference type="SAM" id="MobiDB-lite"/>
    </source>
</evidence>
<evidence type="ECO:0000305" key="4"/>
<sequence>MNDSGNSSKVNVRPPSAGLGAPSPGKRKMLRLEVRNSQVPIERKPSWIRARATIGTEYRKVQERVKKQNLRTVCQEAGCPNIYECWEDREATFLIGGSQCTRRCDFCQIDTGKPAELDLDEPKRVGQSVAQMKLRYATVTGVARDDLPDGGVWLYAETIREIHKQCPGSGVEILIPDFNGKPELLQQIFEAQPEVYAHNIETVPRIFRRIRPAFRYDRSLDVISQGQKAGMITKSNLILGMGETGEEVTQALRDLKSAGCDIVTITQYLRPSPRHLPVARWVKPQEFIEYKEQAKEIGFSGVLAGPLVRSSYRAGKLWAQSVKAKMVEIPERVRKLINEIEMQETSFRQAV</sequence>
<reference key="1">
    <citation type="journal article" date="2003" name="Genome Res.">
        <title>Tropheryma whipplei twist: a human pathogenic Actinobacteria with a reduced genome.</title>
        <authorList>
            <person name="Raoult D."/>
            <person name="Ogata H."/>
            <person name="Audic S."/>
            <person name="Robert C."/>
            <person name="Suhre K."/>
            <person name="Drancourt M."/>
            <person name="Claverie J.-M."/>
        </authorList>
    </citation>
    <scope>NUCLEOTIDE SEQUENCE [LARGE SCALE GENOMIC DNA]</scope>
    <source>
        <strain>Twist</strain>
    </source>
</reference>
<feature type="chain" id="PRO_0000102376" description="Lipoyl synthase">
    <location>
        <begin position="1"/>
        <end position="351"/>
    </location>
</feature>
<feature type="domain" description="Radical SAM core" evidence="2">
    <location>
        <begin position="86"/>
        <end position="300"/>
    </location>
</feature>
<feature type="region of interest" description="Disordered" evidence="3">
    <location>
        <begin position="1"/>
        <end position="27"/>
    </location>
</feature>
<feature type="compositionally biased region" description="Polar residues" evidence="3">
    <location>
        <begin position="1"/>
        <end position="10"/>
    </location>
</feature>
<feature type="compositionally biased region" description="Low complexity" evidence="3">
    <location>
        <begin position="14"/>
        <end position="24"/>
    </location>
</feature>
<feature type="binding site" evidence="1">
    <location>
        <position position="74"/>
    </location>
    <ligand>
        <name>[4Fe-4S] cluster</name>
        <dbReference type="ChEBI" id="CHEBI:49883"/>
        <label>1</label>
    </ligand>
</feature>
<feature type="binding site" evidence="1">
    <location>
        <position position="79"/>
    </location>
    <ligand>
        <name>[4Fe-4S] cluster</name>
        <dbReference type="ChEBI" id="CHEBI:49883"/>
        <label>1</label>
    </ligand>
</feature>
<feature type="binding site" evidence="1">
    <location>
        <position position="85"/>
    </location>
    <ligand>
        <name>[4Fe-4S] cluster</name>
        <dbReference type="ChEBI" id="CHEBI:49883"/>
        <label>1</label>
    </ligand>
</feature>
<feature type="binding site" evidence="1">
    <location>
        <position position="100"/>
    </location>
    <ligand>
        <name>[4Fe-4S] cluster</name>
        <dbReference type="ChEBI" id="CHEBI:49883"/>
        <label>2</label>
        <note>4Fe-4S-S-AdoMet</note>
    </ligand>
</feature>
<feature type="binding site" evidence="1">
    <location>
        <position position="104"/>
    </location>
    <ligand>
        <name>[4Fe-4S] cluster</name>
        <dbReference type="ChEBI" id="CHEBI:49883"/>
        <label>2</label>
        <note>4Fe-4S-S-AdoMet</note>
    </ligand>
</feature>
<feature type="binding site" evidence="1">
    <location>
        <position position="107"/>
    </location>
    <ligand>
        <name>[4Fe-4S] cluster</name>
        <dbReference type="ChEBI" id="CHEBI:49883"/>
        <label>2</label>
        <note>4Fe-4S-S-AdoMet</note>
    </ligand>
</feature>
<feature type="binding site" evidence="1">
    <location>
        <position position="311"/>
    </location>
    <ligand>
        <name>[4Fe-4S] cluster</name>
        <dbReference type="ChEBI" id="CHEBI:49883"/>
        <label>1</label>
    </ligand>
</feature>
<dbReference type="EC" id="2.8.1.8" evidence="1"/>
<dbReference type="EMBL" id="AE014184">
    <property type="protein sequence ID" value="AAO44561.1"/>
    <property type="status" value="ALT_INIT"/>
    <property type="molecule type" value="Genomic_DNA"/>
</dbReference>
<dbReference type="SMR" id="Q83MU9"/>
<dbReference type="STRING" id="203267.TWT_464"/>
<dbReference type="KEGG" id="twh:TWT_464"/>
<dbReference type="eggNOG" id="COG0320">
    <property type="taxonomic scope" value="Bacteria"/>
</dbReference>
<dbReference type="HOGENOM" id="CLU_033144_2_1_11"/>
<dbReference type="UniPathway" id="UPA00538">
    <property type="reaction ID" value="UER00593"/>
</dbReference>
<dbReference type="Proteomes" id="UP000002200">
    <property type="component" value="Chromosome"/>
</dbReference>
<dbReference type="GO" id="GO:0005737">
    <property type="term" value="C:cytoplasm"/>
    <property type="evidence" value="ECO:0007669"/>
    <property type="project" value="UniProtKB-SubCell"/>
</dbReference>
<dbReference type="GO" id="GO:0051539">
    <property type="term" value="F:4 iron, 4 sulfur cluster binding"/>
    <property type="evidence" value="ECO:0007669"/>
    <property type="project" value="UniProtKB-UniRule"/>
</dbReference>
<dbReference type="GO" id="GO:0016992">
    <property type="term" value="F:lipoate synthase activity"/>
    <property type="evidence" value="ECO:0007669"/>
    <property type="project" value="UniProtKB-UniRule"/>
</dbReference>
<dbReference type="GO" id="GO:0046872">
    <property type="term" value="F:metal ion binding"/>
    <property type="evidence" value="ECO:0007669"/>
    <property type="project" value="UniProtKB-KW"/>
</dbReference>
<dbReference type="CDD" id="cd01335">
    <property type="entry name" value="Radical_SAM"/>
    <property type="match status" value="1"/>
</dbReference>
<dbReference type="Gene3D" id="3.20.20.70">
    <property type="entry name" value="Aldolase class I"/>
    <property type="match status" value="1"/>
</dbReference>
<dbReference type="HAMAP" id="MF_00206">
    <property type="entry name" value="Lipoyl_synth"/>
    <property type="match status" value="1"/>
</dbReference>
<dbReference type="InterPro" id="IPR013785">
    <property type="entry name" value="Aldolase_TIM"/>
</dbReference>
<dbReference type="InterPro" id="IPR006638">
    <property type="entry name" value="Elp3/MiaA/NifB-like_rSAM"/>
</dbReference>
<dbReference type="InterPro" id="IPR031691">
    <property type="entry name" value="LIAS_N"/>
</dbReference>
<dbReference type="InterPro" id="IPR003698">
    <property type="entry name" value="Lipoyl_synth"/>
</dbReference>
<dbReference type="InterPro" id="IPR007197">
    <property type="entry name" value="rSAM"/>
</dbReference>
<dbReference type="NCBIfam" id="TIGR00510">
    <property type="entry name" value="lipA"/>
    <property type="match status" value="1"/>
</dbReference>
<dbReference type="NCBIfam" id="NF004019">
    <property type="entry name" value="PRK05481.1"/>
    <property type="match status" value="1"/>
</dbReference>
<dbReference type="NCBIfam" id="NF009544">
    <property type="entry name" value="PRK12928.1"/>
    <property type="match status" value="1"/>
</dbReference>
<dbReference type="PANTHER" id="PTHR10949">
    <property type="entry name" value="LIPOYL SYNTHASE"/>
    <property type="match status" value="1"/>
</dbReference>
<dbReference type="PANTHER" id="PTHR10949:SF0">
    <property type="entry name" value="LIPOYL SYNTHASE, MITOCHONDRIAL"/>
    <property type="match status" value="1"/>
</dbReference>
<dbReference type="Pfam" id="PF16881">
    <property type="entry name" value="LIAS_N"/>
    <property type="match status" value="1"/>
</dbReference>
<dbReference type="Pfam" id="PF04055">
    <property type="entry name" value="Radical_SAM"/>
    <property type="match status" value="1"/>
</dbReference>
<dbReference type="PIRSF" id="PIRSF005963">
    <property type="entry name" value="Lipoyl_synth"/>
    <property type="match status" value="1"/>
</dbReference>
<dbReference type="SFLD" id="SFLDF00271">
    <property type="entry name" value="lipoyl_synthase"/>
    <property type="match status" value="1"/>
</dbReference>
<dbReference type="SFLD" id="SFLDG01058">
    <property type="entry name" value="lipoyl_synthase_like"/>
    <property type="match status" value="1"/>
</dbReference>
<dbReference type="SMART" id="SM00729">
    <property type="entry name" value="Elp3"/>
    <property type="match status" value="1"/>
</dbReference>
<dbReference type="SUPFAM" id="SSF102114">
    <property type="entry name" value="Radical SAM enzymes"/>
    <property type="match status" value="1"/>
</dbReference>
<dbReference type="PROSITE" id="PS51918">
    <property type="entry name" value="RADICAL_SAM"/>
    <property type="match status" value="1"/>
</dbReference>
<name>LIPA_TROWT</name>
<keyword id="KW-0004">4Fe-4S</keyword>
<keyword id="KW-0963">Cytoplasm</keyword>
<keyword id="KW-0408">Iron</keyword>
<keyword id="KW-0411">Iron-sulfur</keyword>
<keyword id="KW-0479">Metal-binding</keyword>
<keyword id="KW-1185">Reference proteome</keyword>
<keyword id="KW-0949">S-adenosyl-L-methionine</keyword>
<keyword id="KW-0808">Transferase</keyword>
<protein>
    <recommendedName>
        <fullName evidence="1">Lipoyl synthase</fullName>
        <ecNumber evidence="1">2.8.1.8</ecNumber>
    </recommendedName>
    <alternativeName>
        <fullName evidence="1">Lip-syn</fullName>
        <shortName evidence="1">LS</shortName>
    </alternativeName>
    <alternativeName>
        <fullName evidence="1">Lipoate synthase</fullName>
    </alternativeName>
    <alternativeName>
        <fullName evidence="1">Lipoic acid synthase</fullName>
    </alternativeName>
    <alternativeName>
        <fullName evidence="1">Sulfur insertion protein LipA</fullName>
    </alternativeName>
</protein>
<proteinExistence type="inferred from homology"/>